<protein>
    <recommendedName>
        <fullName>Membrane transporter D1</fullName>
    </recommendedName>
</protein>
<evidence type="ECO:0000255" key="1"/>
<evidence type="ECO:0000256" key="2">
    <source>
        <dbReference type="SAM" id="MobiDB-lite"/>
    </source>
</evidence>
<evidence type="ECO:0000305" key="3"/>
<comment type="subcellular location">
    <subcellularLocation>
        <location>Membrane</location>
        <topology>Multi-pass membrane protein</topology>
    </subcellularLocation>
</comment>
<comment type="similarity">
    <text evidence="3">Belongs to the major facilitator superfamily. Sugar transporter (TC 2.A.1.1) family.</text>
</comment>
<proteinExistence type="inferred from homology"/>
<name>GTR1_LEIDO</name>
<dbReference type="EMBL" id="M85072">
    <property type="protein sequence ID" value="AAA29230.1"/>
    <property type="molecule type" value="Genomic_DNA"/>
</dbReference>
<dbReference type="PIR" id="A48442">
    <property type="entry name" value="A48442"/>
</dbReference>
<dbReference type="SMR" id="Q01440"/>
<dbReference type="TCDB" id="2.A.1.1.20">
    <property type="family name" value="the major facilitator superfamily (mfs)"/>
</dbReference>
<dbReference type="VEuPathDB" id="TriTrypDB:LdBPK_240690.1"/>
<dbReference type="VEuPathDB" id="TriTrypDB:LdCL_240011900"/>
<dbReference type="VEuPathDB" id="TriTrypDB:LDHU3_24.0820"/>
<dbReference type="GO" id="GO:0016020">
    <property type="term" value="C:membrane"/>
    <property type="evidence" value="ECO:0007669"/>
    <property type="project" value="UniProtKB-SubCell"/>
</dbReference>
<dbReference type="GO" id="GO:0022857">
    <property type="term" value="F:transmembrane transporter activity"/>
    <property type="evidence" value="ECO:0007669"/>
    <property type="project" value="InterPro"/>
</dbReference>
<dbReference type="CDD" id="cd17360">
    <property type="entry name" value="MFS_HMIT_like"/>
    <property type="match status" value="1"/>
</dbReference>
<dbReference type="FunFam" id="1.20.1250.20:FF:000914">
    <property type="entry name" value="Myo-inositol/proton symporter (MIT)"/>
    <property type="match status" value="1"/>
</dbReference>
<dbReference type="Gene3D" id="1.20.1250.20">
    <property type="entry name" value="MFS general substrate transporter like domains"/>
    <property type="match status" value="1"/>
</dbReference>
<dbReference type="InterPro" id="IPR020846">
    <property type="entry name" value="MFS_dom"/>
</dbReference>
<dbReference type="InterPro" id="IPR005828">
    <property type="entry name" value="MFS_sugar_transport-like"/>
</dbReference>
<dbReference type="InterPro" id="IPR036259">
    <property type="entry name" value="MFS_trans_sf"/>
</dbReference>
<dbReference type="InterPro" id="IPR050814">
    <property type="entry name" value="Myo-inositol_Transporter"/>
</dbReference>
<dbReference type="InterPro" id="IPR003663">
    <property type="entry name" value="Sugar/inositol_transpt"/>
</dbReference>
<dbReference type="InterPro" id="IPR005829">
    <property type="entry name" value="Sugar_transporter_CS"/>
</dbReference>
<dbReference type="NCBIfam" id="TIGR00879">
    <property type="entry name" value="SP"/>
    <property type="match status" value="1"/>
</dbReference>
<dbReference type="PANTHER" id="PTHR48020">
    <property type="entry name" value="PROTON MYO-INOSITOL COTRANSPORTER"/>
    <property type="match status" value="1"/>
</dbReference>
<dbReference type="PANTHER" id="PTHR48020:SF12">
    <property type="entry name" value="PROTON MYO-INOSITOL COTRANSPORTER"/>
    <property type="match status" value="1"/>
</dbReference>
<dbReference type="Pfam" id="PF00083">
    <property type="entry name" value="Sugar_tr"/>
    <property type="match status" value="1"/>
</dbReference>
<dbReference type="PRINTS" id="PR00171">
    <property type="entry name" value="SUGRTRNSPORT"/>
</dbReference>
<dbReference type="SUPFAM" id="SSF103473">
    <property type="entry name" value="MFS general substrate transporter"/>
    <property type="match status" value="1"/>
</dbReference>
<dbReference type="PROSITE" id="PS50850">
    <property type="entry name" value="MFS"/>
    <property type="match status" value="1"/>
</dbReference>
<dbReference type="PROSITE" id="PS00216">
    <property type="entry name" value="SUGAR_TRANSPORT_1"/>
    <property type="match status" value="1"/>
</dbReference>
<dbReference type="PROSITE" id="PS00217">
    <property type="entry name" value="SUGAR_TRANSPORT_2"/>
    <property type="match status" value="1"/>
</dbReference>
<reference key="1">
    <citation type="journal article" date="1992" name="Mol. Biochem. Parasitol.">
        <title>Molecular characterization of two genes encoding members of the glucose transporter superfamily in the parasitic protozoan Leishmania donovani.</title>
        <authorList>
            <person name="Langford C.K."/>
            <person name="Ewbank S.A."/>
            <person name="Hanson S.S."/>
            <person name="Ullman B."/>
            <person name="Landfear S.M."/>
        </authorList>
    </citation>
    <scope>NUCLEOTIDE SEQUENCE [GENOMIC DNA]</scope>
</reference>
<sequence length="547" mass="58788">MRASVMLCAALGGFLFGYDTGVINAALFQMKDHFGFSEHSWQYALIVAIAIAGAFVGAFISGFISAAFGRRPCIAVADALFVIGSVLMGAAPNVEVVLVSRVIVGLAIGISSATIPVYLAEVTSPKHRGATIVLNNLFLTGGQFVAAGFTAIMVVFTSKNIGWRVAIGIGALPAVVQAFCLLFFLPESPRWLLSKGHADRAKAVADKFEVDLCEFQEGDELPSVRIDYRPLMARDMRFRVVLSSGLQIIQQFSGINTIMYYSSVILYDAGFRDAIMPVVLSIPLAFMNALFTAVAIFTVDRFGRRRMLLISVFGCLVLLVVIAIIGFFIGTRISYSVGGGLFLALLAVFLALYAPGIGCIPWVIMGEIFPTHLRTSAASVATMANWGANVLVSQVFPILMGAIGVGGTFTIISGLMALGCIFVYFFAVETKGLTLEQIDNMFRKRAGLPPRFHEEGESGESGAGYREDGDLGRLATEDVCDLSSLGNRVVSFAKAEDAFTEVAMPDRHAVSNKFEERATSSSSDPQSLENQDEVRQAAIKAAPHEPK</sequence>
<keyword id="KW-0472">Membrane</keyword>
<keyword id="KW-0762">Sugar transport</keyword>
<keyword id="KW-0812">Transmembrane</keyword>
<keyword id="KW-1133">Transmembrane helix</keyword>
<keyword id="KW-0813">Transport</keyword>
<feature type="chain" id="PRO_0000050451" description="Membrane transporter D1">
    <location>
        <begin position="1"/>
        <end position="547"/>
    </location>
</feature>
<feature type="topological domain" description="Cytoplasmic" evidence="1">
    <location>
        <begin position="1"/>
        <end position="2"/>
    </location>
</feature>
<feature type="transmembrane region" description="Helical; Name=1" evidence="1">
    <location>
        <begin position="3"/>
        <end position="25"/>
    </location>
</feature>
<feature type="topological domain" description="Extracellular" evidence="1">
    <location>
        <begin position="26"/>
        <end position="43"/>
    </location>
</feature>
<feature type="transmembrane region" description="Helical; Name=2" evidence="1">
    <location>
        <begin position="44"/>
        <end position="64"/>
    </location>
</feature>
<feature type="topological domain" description="Cytoplasmic" evidence="1">
    <location>
        <begin position="65"/>
        <end position="78"/>
    </location>
</feature>
<feature type="transmembrane region" description="Helical; Name=3" evidence="1">
    <location>
        <begin position="79"/>
        <end position="99"/>
    </location>
</feature>
<feature type="topological domain" description="Extracellular" evidence="1">
    <location>
        <begin position="100"/>
        <end position="101"/>
    </location>
</feature>
<feature type="transmembrane region" description="Helical; Name=4" evidence="1">
    <location>
        <begin position="102"/>
        <end position="122"/>
    </location>
</feature>
<feature type="topological domain" description="Cytoplasmic" evidence="1">
    <location>
        <begin position="123"/>
        <end position="136"/>
    </location>
</feature>
<feature type="transmembrane region" description="Helical; Name=5" evidence="1">
    <location>
        <begin position="137"/>
        <end position="157"/>
    </location>
</feature>
<feature type="topological domain" description="Extracellular" evidence="1">
    <location>
        <begin position="158"/>
        <end position="164"/>
    </location>
</feature>
<feature type="transmembrane region" description="Helical; Name=6" evidence="1">
    <location>
        <begin position="165"/>
        <end position="185"/>
    </location>
</feature>
<feature type="topological domain" description="Cytoplasmic" evidence="1">
    <location>
        <begin position="186"/>
        <end position="245"/>
    </location>
</feature>
<feature type="transmembrane region" description="Helical; Name=7" evidence="1">
    <location>
        <begin position="246"/>
        <end position="266"/>
    </location>
</feature>
<feature type="topological domain" description="Extracellular" evidence="1">
    <location>
        <begin position="267"/>
        <end position="276"/>
    </location>
</feature>
<feature type="transmembrane region" description="Helical; Name=8" evidence="1">
    <location>
        <begin position="277"/>
        <end position="297"/>
    </location>
</feature>
<feature type="topological domain" description="Cytoplasmic" evidence="1">
    <location>
        <begin position="298"/>
        <end position="308"/>
    </location>
</feature>
<feature type="transmembrane region" description="Helical; Name=9" evidence="1">
    <location>
        <begin position="309"/>
        <end position="329"/>
    </location>
</feature>
<feature type="topological domain" description="Extracellular" evidence="1">
    <location>
        <begin position="330"/>
        <end position="339"/>
    </location>
</feature>
<feature type="transmembrane region" description="Helical; Name=10" evidence="1">
    <location>
        <begin position="340"/>
        <end position="360"/>
    </location>
</feature>
<feature type="topological domain" description="Cytoplasmic" evidence="1">
    <location>
        <begin position="361"/>
        <end position="385"/>
    </location>
</feature>
<feature type="transmembrane region" description="Helical; Name=11" evidence="1">
    <location>
        <begin position="386"/>
        <end position="406"/>
    </location>
</feature>
<feature type="topological domain" description="Extracellular" evidence="1">
    <location>
        <position position="407"/>
    </location>
</feature>
<feature type="transmembrane region" description="Helical; Name=12" evidence="1">
    <location>
        <begin position="408"/>
        <end position="428"/>
    </location>
</feature>
<feature type="topological domain" description="Cytoplasmic" evidence="1">
    <location>
        <begin position="429"/>
        <end position="547"/>
    </location>
</feature>
<feature type="region of interest" description="Disordered" evidence="2">
    <location>
        <begin position="449"/>
        <end position="468"/>
    </location>
</feature>
<feature type="region of interest" description="Disordered" evidence="2">
    <location>
        <begin position="510"/>
        <end position="547"/>
    </location>
</feature>
<feature type="compositionally biased region" description="Polar residues" evidence="2">
    <location>
        <begin position="519"/>
        <end position="529"/>
    </location>
</feature>
<accession>Q01440</accession>
<organism>
    <name type="scientific">Leishmania donovani</name>
    <dbReference type="NCBI Taxonomy" id="5661"/>
    <lineage>
        <taxon>Eukaryota</taxon>
        <taxon>Discoba</taxon>
        <taxon>Euglenozoa</taxon>
        <taxon>Kinetoplastea</taxon>
        <taxon>Metakinetoplastina</taxon>
        <taxon>Trypanosomatida</taxon>
        <taxon>Trypanosomatidae</taxon>
        <taxon>Leishmaniinae</taxon>
        <taxon>Leishmania</taxon>
    </lineage>
</organism>